<sequence length="273" mass="29108">MTLDLQTTIEKAWESRANLSPADASAEVREAVEHTIDALDQGRLRVADKSSGEWIVHQWIKKAVLLSFRLQDNEVMGEAPLTFYDKVQTKFADFGAAAFKAGGYRVVPPAVARRGSFIGRNVVLMPSYVNIGAYVDEGTMVDTWATVGSCAQIGKNVHLSGGVGIGGVLEPLQANPTIIEDNCFIGARSEVVEGVVVEENSVLAMGVFLSQSTKIFDRATGTITYGRVPSGSVVVPGSLPSADGSHSLACAVIVKRVDAQTRAKTSINDLLRA</sequence>
<accession>Q2L2J5</accession>
<feature type="chain" id="PRO_1000047119" description="2,3,4,5-tetrahydropyridine-2,6-dicarboxylate N-succinyltransferase">
    <location>
        <begin position="1"/>
        <end position="273"/>
    </location>
</feature>
<feature type="binding site" evidence="1">
    <location>
        <position position="105"/>
    </location>
    <ligand>
        <name>substrate</name>
    </ligand>
</feature>
<feature type="binding site" evidence="1">
    <location>
        <position position="142"/>
    </location>
    <ligand>
        <name>substrate</name>
    </ligand>
</feature>
<dbReference type="EC" id="2.3.1.117" evidence="1"/>
<dbReference type="EMBL" id="AM167904">
    <property type="protein sequence ID" value="CAJ49030.1"/>
    <property type="molecule type" value="Genomic_DNA"/>
</dbReference>
<dbReference type="RefSeq" id="WP_012417102.1">
    <property type="nucleotide sequence ID" value="NC_010645.1"/>
</dbReference>
<dbReference type="SMR" id="Q2L2J5"/>
<dbReference type="STRING" id="360910.BAV1421"/>
<dbReference type="GeneID" id="92935454"/>
<dbReference type="KEGG" id="bav:BAV1421"/>
<dbReference type="eggNOG" id="COG2171">
    <property type="taxonomic scope" value="Bacteria"/>
</dbReference>
<dbReference type="HOGENOM" id="CLU_050859_0_1_4"/>
<dbReference type="OrthoDB" id="9775362at2"/>
<dbReference type="UniPathway" id="UPA00034">
    <property type="reaction ID" value="UER00019"/>
</dbReference>
<dbReference type="Proteomes" id="UP000001977">
    <property type="component" value="Chromosome"/>
</dbReference>
<dbReference type="GO" id="GO:0005737">
    <property type="term" value="C:cytoplasm"/>
    <property type="evidence" value="ECO:0007669"/>
    <property type="project" value="UniProtKB-SubCell"/>
</dbReference>
<dbReference type="GO" id="GO:0008666">
    <property type="term" value="F:2,3,4,5-tetrahydropyridine-2,6-dicarboxylate N-succinyltransferase activity"/>
    <property type="evidence" value="ECO:0007669"/>
    <property type="project" value="UniProtKB-UniRule"/>
</dbReference>
<dbReference type="GO" id="GO:0016779">
    <property type="term" value="F:nucleotidyltransferase activity"/>
    <property type="evidence" value="ECO:0007669"/>
    <property type="project" value="TreeGrafter"/>
</dbReference>
<dbReference type="GO" id="GO:0019877">
    <property type="term" value="P:diaminopimelate biosynthetic process"/>
    <property type="evidence" value="ECO:0007669"/>
    <property type="project" value="UniProtKB-UniRule"/>
</dbReference>
<dbReference type="GO" id="GO:0009089">
    <property type="term" value="P:lysine biosynthetic process via diaminopimelate"/>
    <property type="evidence" value="ECO:0007669"/>
    <property type="project" value="UniProtKB-UniRule"/>
</dbReference>
<dbReference type="CDD" id="cd03350">
    <property type="entry name" value="LbH_THP_succinylT"/>
    <property type="match status" value="1"/>
</dbReference>
<dbReference type="Gene3D" id="2.160.10.10">
    <property type="entry name" value="Hexapeptide repeat proteins"/>
    <property type="match status" value="1"/>
</dbReference>
<dbReference type="Gene3D" id="1.10.166.10">
    <property type="entry name" value="Tetrahydrodipicolinate-N-succinyltransferase, N-terminal domain"/>
    <property type="match status" value="1"/>
</dbReference>
<dbReference type="HAMAP" id="MF_00811">
    <property type="entry name" value="DapD"/>
    <property type="match status" value="1"/>
</dbReference>
<dbReference type="InterPro" id="IPR005664">
    <property type="entry name" value="DapD_Trfase_Hexpep_rpt_fam"/>
</dbReference>
<dbReference type="InterPro" id="IPR001451">
    <property type="entry name" value="Hexapep"/>
</dbReference>
<dbReference type="InterPro" id="IPR018357">
    <property type="entry name" value="Hexapep_transf_CS"/>
</dbReference>
<dbReference type="InterPro" id="IPR023180">
    <property type="entry name" value="THP_succinylTrfase_dom1"/>
</dbReference>
<dbReference type="InterPro" id="IPR037133">
    <property type="entry name" value="THP_succinylTrfase_N_sf"/>
</dbReference>
<dbReference type="InterPro" id="IPR011004">
    <property type="entry name" value="Trimer_LpxA-like_sf"/>
</dbReference>
<dbReference type="NCBIfam" id="TIGR00965">
    <property type="entry name" value="dapD"/>
    <property type="match status" value="1"/>
</dbReference>
<dbReference type="NCBIfam" id="NF008808">
    <property type="entry name" value="PRK11830.1"/>
    <property type="match status" value="1"/>
</dbReference>
<dbReference type="PANTHER" id="PTHR19136:SF52">
    <property type="entry name" value="2,3,4,5-TETRAHYDROPYRIDINE-2,6-DICARBOXYLATE N-SUCCINYLTRANSFERASE"/>
    <property type="match status" value="1"/>
</dbReference>
<dbReference type="PANTHER" id="PTHR19136">
    <property type="entry name" value="MOLYBDENUM COFACTOR GUANYLYLTRANSFERASE"/>
    <property type="match status" value="1"/>
</dbReference>
<dbReference type="Pfam" id="PF14602">
    <property type="entry name" value="Hexapep_2"/>
    <property type="match status" value="1"/>
</dbReference>
<dbReference type="Pfam" id="PF14805">
    <property type="entry name" value="THDPS_N_2"/>
    <property type="match status" value="1"/>
</dbReference>
<dbReference type="SUPFAM" id="SSF51161">
    <property type="entry name" value="Trimeric LpxA-like enzymes"/>
    <property type="match status" value="1"/>
</dbReference>
<dbReference type="PROSITE" id="PS00101">
    <property type="entry name" value="HEXAPEP_TRANSFERASES"/>
    <property type="match status" value="1"/>
</dbReference>
<protein>
    <recommendedName>
        <fullName evidence="1">2,3,4,5-tetrahydropyridine-2,6-dicarboxylate N-succinyltransferase</fullName>
        <ecNumber evidence="1">2.3.1.117</ecNumber>
    </recommendedName>
    <alternativeName>
        <fullName evidence="1">Tetrahydrodipicolinate N-succinyltransferase</fullName>
        <shortName evidence="1">THDP succinyltransferase</shortName>
        <shortName evidence="1">THP succinyltransferase</shortName>
        <shortName evidence="1">Tetrahydropicolinate succinylase</shortName>
    </alternativeName>
</protein>
<evidence type="ECO:0000255" key="1">
    <source>
        <dbReference type="HAMAP-Rule" id="MF_00811"/>
    </source>
</evidence>
<reference key="1">
    <citation type="journal article" date="2006" name="J. Bacteriol.">
        <title>Comparison of the genome sequence of the poultry pathogen Bordetella avium with those of B. bronchiseptica, B. pertussis, and B. parapertussis reveals extensive diversity in surface structures associated with host interaction.</title>
        <authorList>
            <person name="Sebaihia M."/>
            <person name="Preston A."/>
            <person name="Maskell D.J."/>
            <person name="Kuzmiak H."/>
            <person name="Connell T.D."/>
            <person name="King N.D."/>
            <person name="Orndorff P.E."/>
            <person name="Miyamoto D.M."/>
            <person name="Thomson N.R."/>
            <person name="Harris D."/>
            <person name="Goble A."/>
            <person name="Lord A."/>
            <person name="Murphy L."/>
            <person name="Quail M.A."/>
            <person name="Rutter S."/>
            <person name="Squares R."/>
            <person name="Squares S."/>
            <person name="Woodward J."/>
            <person name="Parkhill J."/>
            <person name="Temple L.M."/>
        </authorList>
    </citation>
    <scope>NUCLEOTIDE SEQUENCE [LARGE SCALE GENOMIC DNA]</scope>
    <source>
        <strain>197N</strain>
    </source>
</reference>
<name>DAPD_BORA1</name>
<gene>
    <name evidence="1" type="primary">dapD</name>
    <name type="ordered locus">BAV1421</name>
</gene>
<organism>
    <name type="scientific">Bordetella avium (strain 197N)</name>
    <dbReference type="NCBI Taxonomy" id="360910"/>
    <lineage>
        <taxon>Bacteria</taxon>
        <taxon>Pseudomonadati</taxon>
        <taxon>Pseudomonadota</taxon>
        <taxon>Betaproteobacteria</taxon>
        <taxon>Burkholderiales</taxon>
        <taxon>Alcaligenaceae</taxon>
        <taxon>Bordetella</taxon>
    </lineage>
</organism>
<comment type="catalytic activity">
    <reaction evidence="1">
        <text>(S)-2,3,4,5-tetrahydrodipicolinate + succinyl-CoA + H2O = (S)-2-succinylamino-6-oxoheptanedioate + CoA</text>
        <dbReference type="Rhea" id="RHEA:17325"/>
        <dbReference type="ChEBI" id="CHEBI:15377"/>
        <dbReference type="ChEBI" id="CHEBI:15685"/>
        <dbReference type="ChEBI" id="CHEBI:16845"/>
        <dbReference type="ChEBI" id="CHEBI:57287"/>
        <dbReference type="ChEBI" id="CHEBI:57292"/>
        <dbReference type="EC" id="2.3.1.117"/>
    </reaction>
</comment>
<comment type="pathway">
    <text evidence="1">Amino-acid biosynthesis; L-lysine biosynthesis via DAP pathway; LL-2,6-diaminopimelate from (S)-tetrahydrodipicolinate (succinylase route): step 1/3.</text>
</comment>
<comment type="subunit">
    <text evidence="1">Homotrimer.</text>
</comment>
<comment type="subcellular location">
    <subcellularLocation>
        <location evidence="1">Cytoplasm</location>
    </subcellularLocation>
</comment>
<comment type="similarity">
    <text evidence="1">Belongs to the transferase hexapeptide repeat family.</text>
</comment>
<keyword id="KW-0012">Acyltransferase</keyword>
<keyword id="KW-0028">Amino-acid biosynthesis</keyword>
<keyword id="KW-0963">Cytoplasm</keyword>
<keyword id="KW-0220">Diaminopimelate biosynthesis</keyword>
<keyword id="KW-0457">Lysine biosynthesis</keyword>
<keyword id="KW-1185">Reference proteome</keyword>
<keyword id="KW-0677">Repeat</keyword>
<keyword id="KW-0808">Transferase</keyword>
<proteinExistence type="inferred from homology"/>